<comment type="function">
    <text evidence="2 3">Catalyzes the dephosphorylation of alpha-D-glucose 1-phosphate (Glc1P) and, to a lesser extent, of other sugar phosphates (PubMed:16990279, PubMed:25484615). Has no activity with the beta form of Glc1P. In addition, YihX has significant phosphatase activity against pyridoxal phosphate (PLP) and low beta-phosphoglucomutase activity (PubMed:16990279).</text>
</comment>
<comment type="catalytic activity">
    <reaction evidence="2 3">
        <text>alpha-D-glucose 1-phosphate + H2O = D-glucose + phosphate</text>
        <dbReference type="Rhea" id="RHEA:19933"/>
        <dbReference type="ChEBI" id="CHEBI:4167"/>
        <dbReference type="ChEBI" id="CHEBI:15377"/>
        <dbReference type="ChEBI" id="CHEBI:43474"/>
        <dbReference type="ChEBI" id="CHEBI:58601"/>
        <dbReference type="EC" id="3.1.3.10"/>
    </reaction>
</comment>
<comment type="cofactor">
    <cofactor evidence="2">
        <name>Mg(2+)</name>
        <dbReference type="ChEBI" id="CHEBI:18420"/>
    </cofactor>
    <cofactor evidence="2">
        <name>Mn(2+)</name>
        <dbReference type="ChEBI" id="CHEBI:29035"/>
    </cofactor>
    <cofactor evidence="2">
        <name>Co(2+)</name>
        <dbReference type="ChEBI" id="CHEBI:48828"/>
    </cofactor>
    <cofactor evidence="2">
        <name>Zn(2+)</name>
        <dbReference type="ChEBI" id="CHEBI:29105"/>
    </cofactor>
    <text evidence="2">Magnesium. Can also use other divalent metal cations such as manganese, cobalt or zinc.</text>
</comment>
<comment type="biophysicochemical properties">
    <kinetics>
        <KM evidence="2">0.028 mM for imido-di-P (with magnesium ions as cofactor and at pH 9)</KM>
        <KM evidence="2">0.24 mM for alpha-D-glucose-1-phosphate (with magnesium ions as cofactor and at pH 9)</KM>
        <KM evidence="2">1.6 mM for alpha-fructose-1-phosphate (with manganese ions as cofactor and at pH 9)</KM>
        <KM evidence="2">3.6 mM for acetyl-phosphate (with magnesium ions as cofactor and at pH 9)</KM>
        <text evidence="3">kcat is 10.2 sec(-1) with alpha-Glc-1-P as substrate. kcat is 1.26 sec(-1) with alpha-Man-1-P as substrate. kcat is 0.98 sec(-1) with alpha-Gal-1-P as substrate. kcat is 0.09 sec(-1) with Glc-6-P as substrate (at pH 7.0 and 37 degrees Celsius).</text>
    </kinetics>
    <phDependence>
        <text evidence="2 3">Optimum pH is 5.0-7.0.</text>
    </phDependence>
    <temperatureDependence>
        <text evidence="3">Optimum temperature is 40 degrees Celsius.</text>
    </temperatureDependence>
</comment>
<comment type="biotechnology">
    <text evidence="8">Is proposed to be a useful catalyst for hydrolytic transformation (e.g. removal) of alpha-Glc-1-P from complex substrate solutions containing multiple sugar phosphates.</text>
</comment>
<comment type="similarity">
    <text evidence="7">Belongs to the HAD-like hydrolase superfamily. YihX family.</text>
</comment>
<comment type="sequence caution" evidence="7">
    <conflict type="erroneous initiation">
        <sequence resource="EMBL-CDS" id="AAB03018"/>
    </conflict>
    <text>Extended N-terminus.</text>
</comment>
<sequence>MLYIFDLGNVIVDIDFNRVLGAWSDLTRIPLASLKKSFHMGEAFHQHERGEISDEAFAEALCHEMALPLSYEQFSHGWQAVFVALRPEVIAIMHKLREQGHRVVVLSNTNRLHTTFWPEEYPEIRDAADHIYLSQDLGMRKPEARIYQHVLQAEGFSPSDTVFFDDNADNIEGANQLGITSILVKDKTTIPDYFAKVLC</sequence>
<evidence type="ECO:0000250" key="1"/>
<evidence type="ECO:0000269" key="2">
    <source>
    </source>
</evidence>
<evidence type="ECO:0000269" key="3">
    <source>
    </source>
</evidence>
<evidence type="ECO:0000269" key="4">
    <source ref="7"/>
</evidence>
<evidence type="ECO:0000303" key="5">
    <source>
    </source>
</evidence>
<evidence type="ECO:0000303" key="6">
    <source>
    </source>
</evidence>
<evidence type="ECO:0000305" key="7"/>
<evidence type="ECO:0000305" key="8">
    <source>
    </source>
</evidence>
<evidence type="ECO:0007829" key="9">
    <source>
        <dbReference type="PDB" id="2B0C"/>
    </source>
</evidence>
<organism>
    <name type="scientific">Escherichia coli (strain K12)</name>
    <dbReference type="NCBI Taxonomy" id="83333"/>
    <lineage>
        <taxon>Bacteria</taxon>
        <taxon>Pseudomonadati</taxon>
        <taxon>Pseudomonadota</taxon>
        <taxon>Gammaproteobacteria</taxon>
        <taxon>Enterobacterales</taxon>
        <taxon>Enterobacteriaceae</taxon>
        <taxon>Escherichia</taxon>
    </lineage>
</organism>
<proteinExistence type="evidence at protein level"/>
<protein>
    <recommendedName>
        <fullName>Alpha-D-glucose 1-phosphate phosphatase YihX</fullName>
        <shortName>Alpha-D-glucose-1-P phosphatase</shortName>
        <ecNumber evidence="2 3">3.1.3.10</ecNumber>
    </recommendedName>
    <alternativeName>
        <fullName>Alpha-D-glucose-1-phosphatase</fullName>
    </alternativeName>
    <alternativeName>
        <fullName evidence="6">Haloacid dehalogenase-like phosphatase 4</fullName>
        <shortName evidence="5 6">HAD4</shortName>
    </alternativeName>
</protein>
<keyword id="KW-0002">3D-structure</keyword>
<keyword id="KW-0378">Hydrolase</keyword>
<keyword id="KW-0460">Magnesium</keyword>
<keyword id="KW-0464">Manganese</keyword>
<keyword id="KW-0479">Metal-binding</keyword>
<keyword id="KW-1185">Reference proteome</keyword>
<reference key="1">
    <citation type="journal article" date="1993" name="Nucleic Acids Res.">
        <title>Analysis of the Escherichia coli genome. III. DNA sequence of the region from 87.2 to 89.2 minutes.</title>
        <authorList>
            <person name="Plunkett G. III"/>
            <person name="Burland V."/>
            <person name="Daniels D.L."/>
            <person name="Blattner F.R."/>
        </authorList>
    </citation>
    <scope>NUCLEOTIDE SEQUENCE [LARGE SCALE GENOMIC DNA]</scope>
    <source>
        <strain>K12 / MG1655 / ATCC 47076</strain>
    </source>
</reference>
<reference key="2">
    <citation type="journal article" date="1997" name="Science">
        <title>The complete genome sequence of Escherichia coli K-12.</title>
        <authorList>
            <person name="Blattner F.R."/>
            <person name="Plunkett G. III"/>
            <person name="Bloch C.A."/>
            <person name="Perna N.T."/>
            <person name="Burland V."/>
            <person name="Riley M."/>
            <person name="Collado-Vides J."/>
            <person name="Glasner J.D."/>
            <person name="Rode C.K."/>
            <person name="Mayhew G.F."/>
            <person name="Gregor J."/>
            <person name="Davis N.W."/>
            <person name="Kirkpatrick H.A."/>
            <person name="Goeden M.A."/>
            <person name="Rose D.J."/>
            <person name="Mau B."/>
            <person name="Shao Y."/>
        </authorList>
    </citation>
    <scope>NUCLEOTIDE SEQUENCE [LARGE SCALE GENOMIC DNA]</scope>
    <source>
        <strain>K12 / MG1655 / ATCC 47076</strain>
    </source>
</reference>
<reference key="3">
    <citation type="journal article" date="2006" name="Mol. Syst. Biol.">
        <title>Highly accurate genome sequences of Escherichia coli K-12 strains MG1655 and W3110.</title>
        <authorList>
            <person name="Hayashi K."/>
            <person name="Morooka N."/>
            <person name="Yamamoto Y."/>
            <person name="Fujita K."/>
            <person name="Isono K."/>
            <person name="Choi S."/>
            <person name="Ohtsubo E."/>
            <person name="Baba T."/>
            <person name="Wanner B.L."/>
            <person name="Mori H."/>
            <person name="Horiuchi T."/>
        </authorList>
    </citation>
    <scope>NUCLEOTIDE SEQUENCE [LARGE SCALE GENOMIC DNA]</scope>
    <source>
        <strain>K12 / W3110 / ATCC 27325 / DSM 5911</strain>
    </source>
</reference>
<reference key="4">
    <citation type="journal article" date="2005" name="FEMS Microbiol. Rev.">
        <title>Enzyme genomics: application of general enzymatic screens to discover new enzymes.</title>
        <authorList>
            <person name="Kuznetsova E."/>
            <person name="Proudfoot M."/>
            <person name="Sanders S.A."/>
            <person name="Reinking J."/>
            <person name="Savchenko A."/>
            <person name="Arrowsmith C.H."/>
            <person name="Edwards A.M."/>
            <person name="Yakunin A.F."/>
        </authorList>
    </citation>
    <scope>FUNCTION AS A PHOSPHATASE</scope>
</reference>
<reference key="5">
    <citation type="journal article" date="2006" name="J. Biol. Chem.">
        <title>Genome-wide analysis of substrate specificities of the Escherichia coli haloacid dehalogenase-like phosphatase family.</title>
        <authorList>
            <person name="Kuznetsova E."/>
            <person name="Proudfoot M."/>
            <person name="Gonzalez C.F."/>
            <person name="Brown G."/>
            <person name="Omelchenko M.V."/>
            <person name="Borozan I."/>
            <person name="Carmel L."/>
            <person name="Wolf Y.I."/>
            <person name="Mori H."/>
            <person name="Savchenko A.V."/>
            <person name="Arrowsmith C.H."/>
            <person name="Koonin E.V."/>
            <person name="Edwards A.M."/>
            <person name="Yakunin A.F."/>
        </authorList>
    </citation>
    <scope>FUNCTION</scope>
    <scope>CATALYTIC ACTIVITY</scope>
    <scope>BIOPHYSICOCHEMICAL PROPERTIES</scope>
    <scope>SUBSTRATE SPECIFICITY</scope>
    <scope>COFACTOR</scope>
</reference>
<reference key="6">
    <citation type="journal article" date="2014" name="J. Mol. Catal., B Enzym.">
        <title>Yihx-encoded haloacid dehalogenase-like phosphatase HAD4 from Escherichia coli is a specific alpha-d-glucose 1-phosphate hydrolase useful for substrate-selective sugar phosphate transformations.</title>
        <authorList>
            <person name="Pfeiffer M."/>
            <person name="Wildberger P."/>
            <person name="Nidetzky B."/>
        </authorList>
    </citation>
    <scope>FUNCTION</scope>
    <scope>CATALYTIC ACTIVITY</scope>
    <scope>SUBSTRATE SPECIFICITY</scope>
    <scope>BIOPHYSICOCHEMICAL PROPERTIES</scope>
    <scope>BIOTECHNOLOGY</scope>
</reference>
<reference key="7">
    <citation type="submission" date="2011-07" db="PDB data bank">
        <title>The 2.0a crystal structure of the putative phosphatase from Escherichia coli.</title>
        <authorList>
            <consortium name="Midwest center for structural genomics (MCSG)"/>
        </authorList>
    </citation>
    <scope>X-RAY CRYSTALLOGRAPHY (2.0 ANGSTROMS) IN COMPLEX WITH SUBSTRATE</scope>
</reference>
<dbReference type="EC" id="3.1.3.10" evidence="2 3"/>
<dbReference type="EMBL" id="L19201">
    <property type="protein sequence ID" value="AAB03018.1"/>
    <property type="status" value="ALT_INIT"/>
    <property type="molecule type" value="Genomic_DNA"/>
</dbReference>
<dbReference type="EMBL" id="U00096">
    <property type="protein sequence ID" value="AAD13447.2"/>
    <property type="molecule type" value="Genomic_DNA"/>
</dbReference>
<dbReference type="EMBL" id="AP009048">
    <property type="protein sequence ID" value="BAE77424.1"/>
    <property type="molecule type" value="Genomic_DNA"/>
</dbReference>
<dbReference type="PIR" id="S40829">
    <property type="entry name" value="S40829"/>
</dbReference>
<dbReference type="RefSeq" id="NP_418321.4">
    <property type="nucleotide sequence ID" value="NC_000913.3"/>
</dbReference>
<dbReference type="RefSeq" id="WP_001295269.1">
    <property type="nucleotide sequence ID" value="NZ_STEB01000017.1"/>
</dbReference>
<dbReference type="PDB" id="2B0C">
    <property type="method" value="X-ray"/>
    <property type="resolution" value="2.00 A"/>
    <property type="chains" value="A=1-199"/>
</dbReference>
<dbReference type="PDB" id="8PNE">
    <property type="method" value="X-ray"/>
    <property type="resolution" value="1.90 A"/>
    <property type="chains" value="A=1-199"/>
</dbReference>
<dbReference type="PDB" id="8PNO">
    <property type="method" value="X-ray"/>
    <property type="resolution" value="2.20 A"/>
    <property type="chains" value="A/B=1-199"/>
</dbReference>
<dbReference type="PDBsum" id="2B0C"/>
<dbReference type="PDBsum" id="8PNE"/>
<dbReference type="PDBsum" id="8PNO"/>
<dbReference type="SMR" id="P0A8Y3"/>
<dbReference type="BioGRID" id="4260964">
    <property type="interactions" value="21"/>
</dbReference>
<dbReference type="DIP" id="DIP-47896N"/>
<dbReference type="FunCoup" id="P0A8Y3">
    <property type="interactions" value="74"/>
</dbReference>
<dbReference type="STRING" id="511145.b3885"/>
<dbReference type="jPOST" id="P0A8Y3"/>
<dbReference type="PaxDb" id="511145-b3885"/>
<dbReference type="EnsemblBacteria" id="AAD13447">
    <property type="protein sequence ID" value="AAD13447"/>
    <property type="gene ID" value="b3885"/>
</dbReference>
<dbReference type="GeneID" id="93778053"/>
<dbReference type="GeneID" id="948380"/>
<dbReference type="KEGG" id="ecj:JW5566"/>
<dbReference type="KEGG" id="eco:b3885"/>
<dbReference type="KEGG" id="ecoc:C3026_21000"/>
<dbReference type="PATRIC" id="fig|1411691.4.peg.2826"/>
<dbReference type="EchoBASE" id="EB1796"/>
<dbReference type="eggNOG" id="COG1011">
    <property type="taxonomic scope" value="Bacteria"/>
</dbReference>
<dbReference type="HOGENOM" id="CLU_045011_9_5_6"/>
<dbReference type="InParanoid" id="P0A8Y3"/>
<dbReference type="OMA" id="IDIDFNR"/>
<dbReference type="OrthoDB" id="9797415at2"/>
<dbReference type="PhylomeDB" id="P0A8Y3"/>
<dbReference type="BioCyc" id="EcoCyc:EG11850-MONOMER"/>
<dbReference type="BioCyc" id="MetaCyc:EG11850-MONOMER"/>
<dbReference type="EvolutionaryTrace" id="P0A8Y3"/>
<dbReference type="PRO" id="PR:P0A8Y3"/>
<dbReference type="Proteomes" id="UP000000625">
    <property type="component" value="Chromosome"/>
</dbReference>
<dbReference type="GO" id="GO:0008877">
    <property type="term" value="F:glucose-1-phosphatase activity"/>
    <property type="evidence" value="ECO:0000314"/>
    <property type="project" value="EcoliWiki"/>
</dbReference>
<dbReference type="GO" id="GO:0000287">
    <property type="term" value="F:magnesium ion binding"/>
    <property type="evidence" value="ECO:0000314"/>
    <property type="project" value="UniProtKB"/>
</dbReference>
<dbReference type="GO" id="GO:0030145">
    <property type="term" value="F:manganese ion binding"/>
    <property type="evidence" value="ECO:0000314"/>
    <property type="project" value="UniProtKB"/>
</dbReference>
<dbReference type="CDD" id="cd02603">
    <property type="entry name" value="HAD_sEH-N_like"/>
    <property type="match status" value="1"/>
</dbReference>
<dbReference type="FunFam" id="1.10.150.240:FF:000009">
    <property type="entry name" value="Alpha-D-glucose-1-phosphate phosphatase YihX"/>
    <property type="match status" value="1"/>
</dbReference>
<dbReference type="Gene3D" id="3.40.50.1000">
    <property type="entry name" value="HAD superfamily/HAD-like"/>
    <property type="match status" value="1"/>
</dbReference>
<dbReference type="Gene3D" id="1.10.150.240">
    <property type="entry name" value="Putative phosphatase, domain 2"/>
    <property type="match status" value="1"/>
</dbReference>
<dbReference type="InterPro" id="IPR036412">
    <property type="entry name" value="HAD-like_sf"/>
</dbReference>
<dbReference type="InterPro" id="IPR006439">
    <property type="entry name" value="HAD-SF_hydro_IA"/>
</dbReference>
<dbReference type="InterPro" id="IPR023214">
    <property type="entry name" value="HAD_sf"/>
</dbReference>
<dbReference type="InterPro" id="IPR023198">
    <property type="entry name" value="PGP-like_dom2"/>
</dbReference>
<dbReference type="NCBIfam" id="TIGR01509">
    <property type="entry name" value="HAD-SF-IA-v3"/>
    <property type="match status" value="1"/>
</dbReference>
<dbReference type="NCBIfam" id="NF006991">
    <property type="entry name" value="PRK09456.1"/>
    <property type="match status" value="1"/>
</dbReference>
<dbReference type="PANTHER" id="PTHR43611">
    <property type="entry name" value="ALPHA-D-GLUCOSE 1-PHOSPHATE PHOSPHATASE"/>
    <property type="match status" value="1"/>
</dbReference>
<dbReference type="PANTHER" id="PTHR43611:SF3">
    <property type="entry name" value="FLAVIN MONONUCLEOTIDE HYDROLASE 1, CHLOROPLATIC"/>
    <property type="match status" value="1"/>
</dbReference>
<dbReference type="Pfam" id="PF00702">
    <property type="entry name" value="Hydrolase"/>
    <property type="match status" value="1"/>
</dbReference>
<dbReference type="PRINTS" id="PR00413">
    <property type="entry name" value="HADHALOGNASE"/>
</dbReference>
<dbReference type="SFLD" id="SFLDG01130">
    <property type="entry name" value="C1.5.1:_Epoxide_Hydrolase_Phos"/>
    <property type="match status" value="1"/>
</dbReference>
<dbReference type="SFLD" id="SFLDS00003">
    <property type="entry name" value="Haloacid_Dehalogenase"/>
    <property type="match status" value="1"/>
</dbReference>
<dbReference type="SUPFAM" id="SSF56784">
    <property type="entry name" value="HAD-like"/>
    <property type="match status" value="1"/>
</dbReference>
<accession>P0A8Y3</accession>
<accession>P32145</accession>
<accession>Q2M8I2</accession>
<name>YIHX_ECOLI</name>
<feature type="chain" id="PRO_0000066265" description="Alpha-D-glucose 1-phosphate phosphatase YihX">
    <location>
        <begin position="1"/>
        <end position="199"/>
    </location>
</feature>
<feature type="active site" description="Nucleophile">
    <location>
        <position position="6"/>
    </location>
</feature>
<feature type="binding site">
    <location>
        <begin position="6"/>
        <end position="8"/>
    </location>
    <ligand>
        <name>substrate</name>
    </ligand>
</feature>
<feature type="binding site" evidence="1">
    <location>
        <position position="6"/>
    </location>
    <ligand>
        <name>Mg(2+)</name>
        <dbReference type="ChEBI" id="CHEBI:18420"/>
    </ligand>
</feature>
<feature type="binding site">
    <location>
        <begin position="107"/>
        <end position="108"/>
    </location>
    <ligand>
        <name>substrate</name>
    </ligand>
</feature>
<feature type="binding site" evidence="4">
    <location>
        <position position="141"/>
    </location>
    <ligand>
        <name>substrate</name>
    </ligand>
</feature>
<feature type="binding site" evidence="1">
    <location>
        <position position="166"/>
    </location>
    <ligand>
        <name>Mg(2+)</name>
        <dbReference type="ChEBI" id="CHEBI:18420"/>
    </ligand>
</feature>
<feature type="binding site" evidence="4">
    <location>
        <position position="166"/>
    </location>
    <ligand>
        <name>substrate</name>
    </ligand>
</feature>
<feature type="strand" evidence="9">
    <location>
        <begin position="2"/>
        <end position="5"/>
    </location>
</feature>
<feature type="turn" evidence="9">
    <location>
        <begin position="8"/>
        <end position="10"/>
    </location>
</feature>
<feature type="strand" evidence="9">
    <location>
        <begin position="11"/>
        <end position="15"/>
    </location>
</feature>
<feature type="helix" evidence="9">
    <location>
        <begin position="17"/>
        <end position="27"/>
    </location>
</feature>
<feature type="helix" evidence="9">
    <location>
        <begin position="31"/>
        <end position="37"/>
    </location>
</feature>
<feature type="helix" evidence="9">
    <location>
        <begin position="42"/>
        <end position="48"/>
    </location>
</feature>
<feature type="helix" evidence="9">
    <location>
        <begin position="54"/>
        <end position="65"/>
    </location>
</feature>
<feature type="helix" evidence="9">
    <location>
        <begin position="71"/>
        <end position="79"/>
    </location>
</feature>
<feature type="strand" evidence="9">
    <location>
        <begin position="82"/>
        <end position="85"/>
    </location>
</feature>
<feature type="helix" evidence="9">
    <location>
        <begin position="87"/>
        <end position="98"/>
    </location>
</feature>
<feature type="strand" evidence="9">
    <location>
        <begin position="102"/>
        <end position="107"/>
    </location>
</feature>
<feature type="helix" evidence="9">
    <location>
        <begin position="118"/>
        <end position="120"/>
    </location>
</feature>
<feature type="helix" evidence="9">
    <location>
        <begin position="122"/>
        <end position="127"/>
    </location>
</feature>
<feature type="strand" evidence="9">
    <location>
        <begin position="129"/>
        <end position="133"/>
    </location>
</feature>
<feature type="helix" evidence="9">
    <location>
        <begin position="134"/>
        <end position="137"/>
    </location>
</feature>
<feature type="helix" evidence="9">
    <location>
        <begin position="144"/>
        <end position="154"/>
    </location>
</feature>
<feature type="helix" evidence="9">
    <location>
        <begin position="158"/>
        <end position="160"/>
    </location>
</feature>
<feature type="strand" evidence="9">
    <location>
        <begin position="161"/>
        <end position="166"/>
    </location>
</feature>
<feature type="helix" evidence="9">
    <location>
        <begin position="168"/>
        <end position="175"/>
    </location>
</feature>
<feature type="turn" evidence="9">
    <location>
        <begin position="176"/>
        <end position="178"/>
    </location>
</feature>
<feature type="strand" evidence="9">
    <location>
        <begin position="180"/>
        <end position="183"/>
    </location>
</feature>
<feature type="helix" evidence="9">
    <location>
        <begin position="189"/>
        <end position="195"/>
    </location>
</feature>
<gene>
    <name type="primary">yihX</name>
    <name type="ordered locus">b3885</name>
    <name type="ordered locus">JW5566</name>
</gene>